<accession>B9KXB8</accession>
<evidence type="ECO:0000255" key="1">
    <source>
        <dbReference type="HAMAP-Rule" id="MF_00211"/>
    </source>
</evidence>
<organism>
    <name type="scientific">Thermomicrobium roseum (strain ATCC 27502 / DSM 5159 / P-2)</name>
    <dbReference type="NCBI Taxonomy" id="309801"/>
    <lineage>
        <taxon>Bacteria</taxon>
        <taxon>Pseudomonadati</taxon>
        <taxon>Thermomicrobiota</taxon>
        <taxon>Thermomicrobia</taxon>
        <taxon>Thermomicrobiales</taxon>
        <taxon>Thermomicrobiaceae</taxon>
        <taxon>Thermomicrobium</taxon>
    </lineage>
</organism>
<feature type="chain" id="PRO_1000198845" description="Anthranilate phosphoribosyltransferase">
    <location>
        <begin position="1"/>
        <end position="348"/>
    </location>
</feature>
<feature type="binding site" evidence="1">
    <location>
        <position position="81"/>
    </location>
    <ligand>
        <name>5-phospho-alpha-D-ribose 1-diphosphate</name>
        <dbReference type="ChEBI" id="CHEBI:58017"/>
    </ligand>
</feature>
<feature type="binding site" evidence="1">
    <location>
        <position position="81"/>
    </location>
    <ligand>
        <name>anthranilate</name>
        <dbReference type="ChEBI" id="CHEBI:16567"/>
        <label>1</label>
    </ligand>
</feature>
<feature type="binding site" evidence="1">
    <location>
        <begin position="84"/>
        <end position="85"/>
    </location>
    <ligand>
        <name>5-phospho-alpha-D-ribose 1-diphosphate</name>
        <dbReference type="ChEBI" id="CHEBI:58017"/>
    </ligand>
</feature>
<feature type="binding site" evidence="1">
    <location>
        <position position="89"/>
    </location>
    <ligand>
        <name>5-phospho-alpha-D-ribose 1-diphosphate</name>
        <dbReference type="ChEBI" id="CHEBI:58017"/>
    </ligand>
</feature>
<feature type="binding site" evidence="1">
    <location>
        <begin position="91"/>
        <end position="94"/>
    </location>
    <ligand>
        <name>5-phospho-alpha-D-ribose 1-diphosphate</name>
        <dbReference type="ChEBI" id="CHEBI:58017"/>
    </ligand>
</feature>
<feature type="binding site" evidence="1">
    <location>
        <position position="93"/>
    </location>
    <ligand>
        <name>Mg(2+)</name>
        <dbReference type="ChEBI" id="CHEBI:18420"/>
        <label>1</label>
    </ligand>
</feature>
<feature type="binding site" evidence="1">
    <location>
        <begin position="109"/>
        <end position="117"/>
    </location>
    <ligand>
        <name>5-phospho-alpha-D-ribose 1-diphosphate</name>
        <dbReference type="ChEBI" id="CHEBI:58017"/>
    </ligand>
</feature>
<feature type="binding site" evidence="1">
    <location>
        <position position="112"/>
    </location>
    <ligand>
        <name>anthranilate</name>
        <dbReference type="ChEBI" id="CHEBI:16567"/>
        <label>1</label>
    </ligand>
</feature>
<feature type="binding site" evidence="1">
    <location>
        <position position="121"/>
    </location>
    <ligand>
        <name>5-phospho-alpha-D-ribose 1-diphosphate</name>
        <dbReference type="ChEBI" id="CHEBI:58017"/>
    </ligand>
</feature>
<feature type="binding site" evidence="1">
    <location>
        <position position="167"/>
    </location>
    <ligand>
        <name>anthranilate</name>
        <dbReference type="ChEBI" id="CHEBI:16567"/>
        <label>2</label>
    </ligand>
</feature>
<feature type="binding site" evidence="1">
    <location>
        <position position="226"/>
    </location>
    <ligand>
        <name>Mg(2+)</name>
        <dbReference type="ChEBI" id="CHEBI:18420"/>
        <label>2</label>
    </ligand>
</feature>
<feature type="binding site" evidence="1">
    <location>
        <position position="227"/>
    </location>
    <ligand>
        <name>Mg(2+)</name>
        <dbReference type="ChEBI" id="CHEBI:18420"/>
        <label>1</label>
    </ligand>
</feature>
<feature type="binding site" evidence="1">
    <location>
        <position position="227"/>
    </location>
    <ligand>
        <name>Mg(2+)</name>
        <dbReference type="ChEBI" id="CHEBI:18420"/>
        <label>2</label>
    </ligand>
</feature>
<dbReference type="EC" id="2.4.2.18" evidence="1"/>
<dbReference type="EMBL" id="CP001275">
    <property type="protein sequence ID" value="ACM05533.1"/>
    <property type="molecule type" value="Genomic_DNA"/>
</dbReference>
<dbReference type="RefSeq" id="WP_012641518.1">
    <property type="nucleotide sequence ID" value="NC_011959.1"/>
</dbReference>
<dbReference type="SMR" id="B9KXB8"/>
<dbReference type="STRING" id="309801.trd_0104"/>
<dbReference type="KEGG" id="tro:trd_0104"/>
<dbReference type="eggNOG" id="COG0547">
    <property type="taxonomic scope" value="Bacteria"/>
</dbReference>
<dbReference type="HOGENOM" id="CLU_034315_2_1_0"/>
<dbReference type="OrthoDB" id="9806430at2"/>
<dbReference type="UniPathway" id="UPA00035">
    <property type="reaction ID" value="UER00041"/>
</dbReference>
<dbReference type="Proteomes" id="UP000000447">
    <property type="component" value="Chromosome"/>
</dbReference>
<dbReference type="GO" id="GO:0005829">
    <property type="term" value="C:cytosol"/>
    <property type="evidence" value="ECO:0007669"/>
    <property type="project" value="TreeGrafter"/>
</dbReference>
<dbReference type="GO" id="GO:0004048">
    <property type="term" value="F:anthranilate phosphoribosyltransferase activity"/>
    <property type="evidence" value="ECO:0007669"/>
    <property type="project" value="UniProtKB-UniRule"/>
</dbReference>
<dbReference type="GO" id="GO:0000287">
    <property type="term" value="F:magnesium ion binding"/>
    <property type="evidence" value="ECO:0007669"/>
    <property type="project" value="UniProtKB-UniRule"/>
</dbReference>
<dbReference type="GO" id="GO:0000162">
    <property type="term" value="P:L-tryptophan biosynthetic process"/>
    <property type="evidence" value="ECO:0007669"/>
    <property type="project" value="UniProtKB-UniRule"/>
</dbReference>
<dbReference type="FunFam" id="3.40.1030.10:FF:000002">
    <property type="entry name" value="Anthranilate phosphoribosyltransferase"/>
    <property type="match status" value="1"/>
</dbReference>
<dbReference type="Gene3D" id="3.40.1030.10">
    <property type="entry name" value="Nucleoside phosphorylase/phosphoribosyltransferase catalytic domain"/>
    <property type="match status" value="1"/>
</dbReference>
<dbReference type="Gene3D" id="1.20.970.10">
    <property type="entry name" value="Transferase, Pyrimidine Nucleoside Phosphorylase, Chain C"/>
    <property type="match status" value="1"/>
</dbReference>
<dbReference type="HAMAP" id="MF_00211">
    <property type="entry name" value="TrpD"/>
    <property type="match status" value="1"/>
</dbReference>
<dbReference type="InterPro" id="IPR005940">
    <property type="entry name" value="Anthranilate_Pribosyl_Tfrase"/>
</dbReference>
<dbReference type="InterPro" id="IPR000312">
    <property type="entry name" value="Glycosyl_Trfase_fam3"/>
</dbReference>
<dbReference type="InterPro" id="IPR017459">
    <property type="entry name" value="Glycosyl_Trfase_fam3_N_dom"/>
</dbReference>
<dbReference type="InterPro" id="IPR036320">
    <property type="entry name" value="Glycosyl_Trfase_fam3_N_dom_sf"/>
</dbReference>
<dbReference type="InterPro" id="IPR035902">
    <property type="entry name" value="Nuc_phospho_transferase"/>
</dbReference>
<dbReference type="NCBIfam" id="TIGR01245">
    <property type="entry name" value="trpD"/>
    <property type="match status" value="1"/>
</dbReference>
<dbReference type="PANTHER" id="PTHR43285">
    <property type="entry name" value="ANTHRANILATE PHOSPHORIBOSYLTRANSFERASE"/>
    <property type="match status" value="1"/>
</dbReference>
<dbReference type="PANTHER" id="PTHR43285:SF2">
    <property type="entry name" value="ANTHRANILATE PHOSPHORIBOSYLTRANSFERASE"/>
    <property type="match status" value="1"/>
</dbReference>
<dbReference type="Pfam" id="PF02885">
    <property type="entry name" value="Glycos_trans_3N"/>
    <property type="match status" value="1"/>
</dbReference>
<dbReference type="Pfam" id="PF00591">
    <property type="entry name" value="Glycos_transf_3"/>
    <property type="match status" value="1"/>
</dbReference>
<dbReference type="SUPFAM" id="SSF52418">
    <property type="entry name" value="Nucleoside phosphorylase/phosphoribosyltransferase catalytic domain"/>
    <property type="match status" value="1"/>
</dbReference>
<dbReference type="SUPFAM" id="SSF47648">
    <property type="entry name" value="Nucleoside phosphorylase/phosphoribosyltransferase N-terminal domain"/>
    <property type="match status" value="1"/>
</dbReference>
<gene>
    <name evidence="1" type="primary">trpD</name>
    <name type="ordered locus">trd_0104</name>
</gene>
<comment type="function">
    <text evidence="1">Catalyzes the transfer of the phosphoribosyl group of 5-phosphorylribose-1-pyrophosphate (PRPP) to anthranilate to yield N-(5'-phosphoribosyl)-anthranilate (PRA).</text>
</comment>
<comment type="catalytic activity">
    <reaction evidence="1">
        <text>N-(5-phospho-beta-D-ribosyl)anthranilate + diphosphate = 5-phospho-alpha-D-ribose 1-diphosphate + anthranilate</text>
        <dbReference type="Rhea" id="RHEA:11768"/>
        <dbReference type="ChEBI" id="CHEBI:16567"/>
        <dbReference type="ChEBI" id="CHEBI:18277"/>
        <dbReference type="ChEBI" id="CHEBI:33019"/>
        <dbReference type="ChEBI" id="CHEBI:58017"/>
        <dbReference type="EC" id="2.4.2.18"/>
    </reaction>
</comment>
<comment type="cofactor">
    <cofactor evidence="1">
        <name>Mg(2+)</name>
        <dbReference type="ChEBI" id="CHEBI:18420"/>
    </cofactor>
    <text evidence="1">Binds 2 magnesium ions per monomer.</text>
</comment>
<comment type="pathway">
    <text evidence="1">Amino-acid biosynthesis; L-tryptophan biosynthesis; L-tryptophan from chorismate: step 2/5.</text>
</comment>
<comment type="subunit">
    <text evidence="1">Homodimer.</text>
</comment>
<comment type="similarity">
    <text evidence="1">Belongs to the anthranilate phosphoribosyltransferase family.</text>
</comment>
<name>TRPD_THERP</name>
<keyword id="KW-0028">Amino-acid biosynthesis</keyword>
<keyword id="KW-0057">Aromatic amino acid biosynthesis</keyword>
<keyword id="KW-0328">Glycosyltransferase</keyword>
<keyword id="KW-0460">Magnesium</keyword>
<keyword id="KW-0479">Metal-binding</keyword>
<keyword id="KW-1185">Reference proteome</keyword>
<keyword id="KW-0808">Transferase</keyword>
<keyword id="KW-0822">Tryptophan biosynthesis</keyword>
<proteinExistence type="inferred from homology"/>
<protein>
    <recommendedName>
        <fullName evidence="1">Anthranilate phosphoribosyltransferase</fullName>
        <ecNumber evidence="1">2.4.2.18</ecNumber>
    </recommendedName>
</protein>
<reference key="1">
    <citation type="journal article" date="2009" name="PLoS ONE">
        <title>Complete genome sequence of the aerobic CO-oxidizing thermophile Thermomicrobium roseum.</title>
        <authorList>
            <person name="Wu D."/>
            <person name="Raymond J."/>
            <person name="Wu M."/>
            <person name="Chatterji S."/>
            <person name="Ren Q."/>
            <person name="Graham J.E."/>
            <person name="Bryant D.A."/>
            <person name="Robb F."/>
            <person name="Colman A."/>
            <person name="Tallon L.J."/>
            <person name="Badger J.H."/>
            <person name="Madupu R."/>
            <person name="Ward N.L."/>
            <person name="Eisen J.A."/>
        </authorList>
    </citation>
    <scope>NUCLEOTIDE SEQUENCE [LARGE SCALE GENOMIC DNA]</scope>
    <source>
        <strain>ATCC 27502 / DSM 5159 / P-2</strain>
    </source>
</reference>
<sequence>MIGSVLQKVVAGQILDIDEAMEAMSAIMTGEATPAQIAALVTALRMRGERETEIAGFVKGLRAHMIPVELQLAQPVIDVVGTGGDGNRTFNISTATAFVVAGAGVPVAKHGNRAMSSRAGSADVLEALGVRIDLNPSAVARCVEEAGIGFMFAQRFHPALRHAAPVRRELGFRTVFNVLGPLANPARVRYQLLGVAMPELVETVARVLALLDVEHALVVHSADGLDEISLGAPTTVYEVRRNGTVEVRRWTLEPESLGLERVPSDALRGGTAEENARIVRAVLEGARGPARDVVLLNAAAALVAADAAQSLAEGLELARHAIDSGAALDRLERLKVLSNALAEAEVPS</sequence>